<organism>
    <name type="scientific">Artibeus toltecus</name>
    <name type="common">Toltec fruit-eating bat</name>
    <dbReference type="NCBI Taxonomy" id="40240"/>
    <lineage>
        <taxon>Eukaryota</taxon>
        <taxon>Metazoa</taxon>
        <taxon>Chordata</taxon>
        <taxon>Craniata</taxon>
        <taxon>Vertebrata</taxon>
        <taxon>Euteleostomi</taxon>
        <taxon>Mammalia</taxon>
        <taxon>Eutheria</taxon>
        <taxon>Laurasiatheria</taxon>
        <taxon>Chiroptera</taxon>
        <taxon>Yangochiroptera</taxon>
        <taxon>Phyllostomidae</taxon>
        <taxon>Stenodermatinae</taxon>
        <taxon>Artibeus</taxon>
    </lineage>
</organism>
<name>CYB_ARTTL</name>
<gene>
    <name type="primary">MT-CYB</name>
    <name type="synonym">COB</name>
    <name type="synonym">CYTB</name>
    <name type="synonym">MTCYB</name>
</gene>
<evidence type="ECO:0000250" key="1"/>
<evidence type="ECO:0000250" key="2">
    <source>
        <dbReference type="UniProtKB" id="P00157"/>
    </source>
</evidence>
<evidence type="ECO:0000255" key="3">
    <source>
        <dbReference type="PROSITE-ProRule" id="PRU00967"/>
    </source>
</evidence>
<evidence type="ECO:0000255" key="4">
    <source>
        <dbReference type="PROSITE-ProRule" id="PRU00968"/>
    </source>
</evidence>
<protein>
    <recommendedName>
        <fullName>Cytochrome b</fullName>
    </recommendedName>
    <alternativeName>
        <fullName>Complex III subunit 3</fullName>
    </alternativeName>
    <alternativeName>
        <fullName>Complex III subunit III</fullName>
    </alternativeName>
    <alternativeName>
        <fullName>Cytochrome b-c1 complex subunit 3</fullName>
    </alternativeName>
    <alternativeName>
        <fullName>Ubiquinol-cytochrome-c reductase complex cytochrome b subunit</fullName>
    </alternativeName>
</protein>
<comment type="function">
    <text evidence="2">Component of the ubiquinol-cytochrome c reductase complex (complex III or cytochrome b-c1 complex) that is part of the mitochondrial respiratory chain. The b-c1 complex mediates electron transfer from ubiquinol to cytochrome c. Contributes to the generation of a proton gradient across the mitochondrial membrane that is then used for ATP synthesis.</text>
</comment>
<comment type="cofactor">
    <cofactor evidence="2">
        <name>heme b</name>
        <dbReference type="ChEBI" id="CHEBI:60344"/>
    </cofactor>
    <text evidence="2">Binds 2 heme b groups non-covalently.</text>
</comment>
<comment type="subunit">
    <text evidence="2">The cytochrome bc1 complex contains 11 subunits: 3 respiratory subunits (MT-CYB, CYC1 and UQCRFS1), 2 core proteins (UQCRC1 and UQCRC2) and 6 low-molecular weight proteins (UQCRH/QCR6, UQCRB/QCR7, UQCRQ/QCR8, UQCR10/QCR9, UQCR11/QCR10 and a cleavage product of UQCRFS1). This cytochrome bc1 complex then forms a dimer.</text>
</comment>
<comment type="subcellular location">
    <subcellularLocation>
        <location evidence="2">Mitochondrion inner membrane</location>
        <topology evidence="2">Multi-pass membrane protein</topology>
    </subcellularLocation>
</comment>
<comment type="miscellaneous">
    <text evidence="1">Heme 1 (or BL or b562) is low-potential and absorbs at about 562 nm, and heme 2 (or BH or b566) is high-potential and absorbs at about 566 nm.</text>
</comment>
<comment type="similarity">
    <text evidence="3 4">Belongs to the cytochrome b family.</text>
</comment>
<comment type="caution">
    <text evidence="2">The full-length protein contains only eight transmembrane helices, not nine as predicted by bioinformatics tools.</text>
</comment>
<proteinExistence type="inferred from homology"/>
<keyword id="KW-0249">Electron transport</keyword>
<keyword id="KW-0349">Heme</keyword>
<keyword id="KW-0408">Iron</keyword>
<keyword id="KW-0472">Membrane</keyword>
<keyword id="KW-0479">Metal-binding</keyword>
<keyword id="KW-0496">Mitochondrion</keyword>
<keyword id="KW-0999">Mitochondrion inner membrane</keyword>
<keyword id="KW-0679">Respiratory chain</keyword>
<keyword id="KW-0812">Transmembrane</keyword>
<keyword id="KW-1133">Transmembrane helix</keyword>
<keyword id="KW-0813">Transport</keyword>
<keyword id="KW-0830">Ubiquinone</keyword>
<sequence>MTNIRKTHPLLKIINSSFVDLPAPSSLSSWWNFGSLLGVCLGVQILTGLFLAMHYTSDTATAFNSVTHICRDVNYGWLLRYLHANGASMFFICLYLHVGRGLYYGSYTYSETWNVGILLLFAVMATAFMGYVLPWGQMSFWGATVITNLLSAIPYIGTELVQWIWGGFSVDKATLTRFFAFHFLLPFIVTALVMVHLLFLHETGSNNPTGFPSDPDMIPLHPYYTIKDILGFLVMLTALAPLVLFSPDLLGDPDNYIPANPSITPPHIKPEWYFLFAYAILRSIPNKLGGVLALVMSILILAIVPILHMSKQRSMMFRPLSQCLFWLLVAVLFTLTWIGGQPVEHPYIIIGQTASVLYFLIILFFMPMTSMVENYLLKW</sequence>
<dbReference type="EMBL" id="U66515">
    <property type="protein sequence ID" value="AAB06785.1"/>
    <property type="molecule type" value="Genomic_DNA"/>
</dbReference>
<dbReference type="EMBL" id="L19513">
    <property type="protein sequence ID" value="AAA67852.1"/>
    <property type="molecule type" value="Genomic_DNA"/>
</dbReference>
<dbReference type="SMR" id="Q95750"/>
<dbReference type="GO" id="GO:0005743">
    <property type="term" value="C:mitochondrial inner membrane"/>
    <property type="evidence" value="ECO:0007669"/>
    <property type="project" value="UniProtKB-SubCell"/>
</dbReference>
<dbReference type="GO" id="GO:0045275">
    <property type="term" value="C:respiratory chain complex III"/>
    <property type="evidence" value="ECO:0007669"/>
    <property type="project" value="InterPro"/>
</dbReference>
<dbReference type="GO" id="GO:0046872">
    <property type="term" value="F:metal ion binding"/>
    <property type="evidence" value="ECO:0007669"/>
    <property type="project" value="UniProtKB-KW"/>
</dbReference>
<dbReference type="GO" id="GO:0008121">
    <property type="term" value="F:ubiquinol-cytochrome-c reductase activity"/>
    <property type="evidence" value="ECO:0007669"/>
    <property type="project" value="InterPro"/>
</dbReference>
<dbReference type="GO" id="GO:0006122">
    <property type="term" value="P:mitochondrial electron transport, ubiquinol to cytochrome c"/>
    <property type="evidence" value="ECO:0007669"/>
    <property type="project" value="TreeGrafter"/>
</dbReference>
<dbReference type="CDD" id="cd00290">
    <property type="entry name" value="cytochrome_b_C"/>
    <property type="match status" value="1"/>
</dbReference>
<dbReference type="CDD" id="cd00284">
    <property type="entry name" value="Cytochrome_b_N"/>
    <property type="match status" value="1"/>
</dbReference>
<dbReference type="FunFam" id="1.20.810.10:FF:000002">
    <property type="entry name" value="Cytochrome b"/>
    <property type="match status" value="1"/>
</dbReference>
<dbReference type="Gene3D" id="1.20.810.10">
    <property type="entry name" value="Cytochrome Bc1 Complex, Chain C"/>
    <property type="match status" value="1"/>
</dbReference>
<dbReference type="InterPro" id="IPR005798">
    <property type="entry name" value="Cyt_b/b6_C"/>
</dbReference>
<dbReference type="InterPro" id="IPR036150">
    <property type="entry name" value="Cyt_b/b6_C_sf"/>
</dbReference>
<dbReference type="InterPro" id="IPR005797">
    <property type="entry name" value="Cyt_b/b6_N"/>
</dbReference>
<dbReference type="InterPro" id="IPR027387">
    <property type="entry name" value="Cytb/b6-like_sf"/>
</dbReference>
<dbReference type="InterPro" id="IPR030689">
    <property type="entry name" value="Cytochrome_b"/>
</dbReference>
<dbReference type="InterPro" id="IPR048260">
    <property type="entry name" value="Cytochrome_b_C_euk/bac"/>
</dbReference>
<dbReference type="InterPro" id="IPR048259">
    <property type="entry name" value="Cytochrome_b_N_euk/bac"/>
</dbReference>
<dbReference type="InterPro" id="IPR016174">
    <property type="entry name" value="Di-haem_cyt_TM"/>
</dbReference>
<dbReference type="PANTHER" id="PTHR19271">
    <property type="entry name" value="CYTOCHROME B"/>
    <property type="match status" value="1"/>
</dbReference>
<dbReference type="PANTHER" id="PTHR19271:SF16">
    <property type="entry name" value="CYTOCHROME B"/>
    <property type="match status" value="1"/>
</dbReference>
<dbReference type="Pfam" id="PF00032">
    <property type="entry name" value="Cytochrom_B_C"/>
    <property type="match status" value="1"/>
</dbReference>
<dbReference type="Pfam" id="PF00033">
    <property type="entry name" value="Cytochrome_B"/>
    <property type="match status" value="1"/>
</dbReference>
<dbReference type="PIRSF" id="PIRSF038885">
    <property type="entry name" value="COB"/>
    <property type="match status" value="1"/>
</dbReference>
<dbReference type="SUPFAM" id="SSF81648">
    <property type="entry name" value="a domain/subunit of cytochrome bc1 complex (Ubiquinol-cytochrome c reductase)"/>
    <property type="match status" value="1"/>
</dbReference>
<dbReference type="SUPFAM" id="SSF81342">
    <property type="entry name" value="Transmembrane di-heme cytochromes"/>
    <property type="match status" value="1"/>
</dbReference>
<dbReference type="PROSITE" id="PS51003">
    <property type="entry name" value="CYTB_CTER"/>
    <property type="match status" value="1"/>
</dbReference>
<dbReference type="PROSITE" id="PS51002">
    <property type="entry name" value="CYTB_NTER"/>
    <property type="match status" value="1"/>
</dbReference>
<accession>Q95750</accession>
<accession>Q34394</accession>
<feature type="chain" id="PRO_0000060642" description="Cytochrome b">
    <location>
        <begin position="1"/>
        <end position="379"/>
    </location>
</feature>
<feature type="transmembrane region" description="Helical" evidence="2">
    <location>
        <begin position="33"/>
        <end position="53"/>
    </location>
</feature>
<feature type="transmembrane region" description="Helical" evidence="2">
    <location>
        <begin position="77"/>
        <end position="98"/>
    </location>
</feature>
<feature type="transmembrane region" description="Helical" evidence="2">
    <location>
        <begin position="113"/>
        <end position="133"/>
    </location>
</feature>
<feature type="transmembrane region" description="Helical" evidence="2">
    <location>
        <begin position="178"/>
        <end position="198"/>
    </location>
</feature>
<feature type="transmembrane region" description="Helical" evidence="2">
    <location>
        <begin position="226"/>
        <end position="246"/>
    </location>
</feature>
<feature type="transmembrane region" description="Helical" evidence="2">
    <location>
        <begin position="288"/>
        <end position="308"/>
    </location>
</feature>
<feature type="transmembrane region" description="Helical" evidence="2">
    <location>
        <begin position="320"/>
        <end position="340"/>
    </location>
</feature>
<feature type="transmembrane region" description="Helical" evidence="2">
    <location>
        <begin position="347"/>
        <end position="367"/>
    </location>
</feature>
<feature type="binding site" description="axial binding residue" evidence="2">
    <location>
        <position position="83"/>
    </location>
    <ligand>
        <name>heme b</name>
        <dbReference type="ChEBI" id="CHEBI:60344"/>
        <label>b562</label>
    </ligand>
    <ligandPart>
        <name>Fe</name>
        <dbReference type="ChEBI" id="CHEBI:18248"/>
    </ligandPart>
</feature>
<feature type="binding site" description="axial binding residue" evidence="2">
    <location>
        <position position="97"/>
    </location>
    <ligand>
        <name>heme b</name>
        <dbReference type="ChEBI" id="CHEBI:60344"/>
        <label>b566</label>
    </ligand>
    <ligandPart>
        <name>Fe</name>
        <dbReference type="ChEBI" id="CHEBI:18248"/>
    </ligandPart>
</feature>
<feature type="binding site" description="axial binding residue" evidence="2">
    <location>
        <position position="182"/>
    </location>
    <ligand>
        <name>heme b</name>
        <dbReference type="ChEBI" id="CHEBI:60344"/>
        <label>b562</label>
    </ligand>
    <ligandPart>
        <name>Fe</name>
        <dbReference type="ChEBI" id="CHEBI:18248"/>
    </ligandPart>
</feature>
<feature type="binding site" description="axial binding residue" evidence="2">
    <location>
        <position position="196"/>
    </location>
    <ligand>
        <name>heme b</name>
        <dbReference type="ChEBI" id="CHEBI:60344"/>
        <label>b566</label>
    </ligand>
    <ligandPart>
        <name>Fe</name>
        <dbReference type="ChEBI" id="CHEBI:18248"/>
    </ligandPart>
</feature>
<feature type="binding site" evidence="2">
    <location>
        <position position="201"/>
    </location>
    <ligand>
        <name>a ubiquinone</name>
        <dbReference type="ChEBI" id="CHEBI:16389"/>
    </ligand>
</feature>
<geneLocation type="mitochondrion"/>
<reference key="1">
    <citation type="submission" date="1996-08" db="EMBL/GenBank/DDBJ databases">
        <title>Phylogenetic accuracy, stability, and congruence: relationships within and among the New World bat genera Artibeus, Dermanura, and Koopmania.</title>
        <authorList>
            <person name="den Bussche R.A."/>
            <person name="Hudgeons J.L."/>
            <person name="Baker R.J."/>
        </authorList>
    </citation>
    <scope>NUCLEOTIDE SEQUENCE [GENOMIC DNA]</scope>
    <source>
        <strain>Isolate TK 22579</strain>
    </source>
</reference>
<reference key="2">
    <citation type="journal article" date="1993" name="Mol. Biol. Evol.">
        <title>Molecular phylogenetics of Stenodermatini bat genera: congruence of data from nuclear and mitochondrial DNA.</title>
        <authorList>
            <person name="den Bussche R.A."/>
            <person name="Baker R.J."/>
            <person name="Wichman H.A."/>
            <person name="Hamilton M.J."/>
        </authorList>
    </citation>
    <scope>NUCLEOTIDE SEQUENCE [GENOMIC DNA] OF 1-134</scope>
    <source>
        <strain>Isolate TK 22579</strain>
        <tissue>Muscle</tissue>
    </source>
</reference>